<sequence>MLSEQTRSLVKATVPVLQQHGVALTSHFYRRMFEHNPELKNVFNQGHQHSGQQQQALAMAVLAYARHIDDPSPLLPVLTRVAHKHVSLGIRAEHYPIVGKHLLASIRELLGEAAGDDLIQAWAEAYGLLADTLIGIENGMYGDATSADGGWSGWRPFRVAKKEIESEEIASFYLEPSDGGALPAFKPGQYVSVKRFVAEWGLSQPRQYSLSDAPNGEYLRISVKREDAAQGKPAGRVSNLLHREVQVGDVLELSAPQGDFFLHEERDGPAVLISAGVGQTPMQAMLGQLLKRGGREVRFLHAARHGGAHAMGAKVRQLADRHPQLKVHVCYETPRAQDAIGVDYQAAGRLNLADVKGIALLPDADYYLCGPLGFMRAQRDSLRGLGVAADRIHYEVFGSHPGDD</sequence>
<organism>
    <name type="scientific">Chromobacterium violaceum (strain ATCC 12472 / DSM 30191 / JCM 1249 / CCUG 213 / NBRC 12614 / NCIMB 9131 / NCTC 9757 / MK)</name>
    <dbReference type="NCBI Taxonomy" id="243365"/>
    <lineage>
        <taxon>Bacteria</taxon>
        <taxon>Pseudomonadati</taxon>
        <taxon>Pseudomonadota</taxon>
        <taxon>Betaproteobacteria</taxon>
        <taxon>Neisseriales</taxon>
        <taxon>Chromobacteriaceae</taxon>
        <taxon>Chromobacterium</taxon>
    </lineage>
</organism>
<comment type="function">
    <text evidence="1">Is involved in NO detoxification in an aerobic process, termed nitric oxide dioxygenase (NOD) reaction that utilizes O(2) and NAD(P)H to convert NO to nitrate, which protects the bacterium from various noxious nitrogen compounds. Therefore, plays a central role in the inducible response to nitrosative stress.</text>
</comment>
<comment type="catalytic activity">
    <reaction evidence="1">
        <text>2 nitric oxide + NADPH + 2 O2 = 2 nitrate + NADP(+) + H(+)</text>
        <dbReference type="Rhea" id="RHEA:19465"/>
        <dbReference type="ChEBI" id="CHEBI:15378"/>
        <dbReference type="ChEBI" id="CHEBI:15379"/>
        <dbReference type="ChEBI" id="CHEBI:16480"/>
        <dbReference type="ChEBI" id="CHEBI:17632"/>
        <dbReference type="ChEBI" id="CHEBI:57783"/>
        <dbReference type="ChEBI" id="CHEBI:58349"/>
        <dbReference type="EC" id="1.14.12.17"/>
    </reaction>
</comment>
<comment type="catalytic activity">
    <reaction evidence="1">
        <text>2 nitric oxide + NADH + 2 O2 = 2 nitrate + NAD(+) + H(+)</text>
        <dbReference type="Rhea" id="RHEA:19469"/>
        <dbReference type="ChEBI" id="CHEBI:15378"/>
        <dbReference type="ChEBI" id="CHEBI:15379"/>
        <dbReference type="ChEBI" id="CHEBI:16480"/>
        <dbReference type="ChEBI" id="CHEBI:17632"/>
        <dbReference type="ChEBI" id="CHEBI:57540"/>
        <dbReference type="ChEBI" id="CHEBI:57945"/>
        <dbReference type="EC" id="1.14.12.17"/>
    </reaction>
</comment>
<comment type="cofactor">
    <cofactor evidence="1">
        <name>heme b</name>
        <dbReference type="ChEBI" id="CHEBI:60344"/>
    </cofactor>
    <text evidence="1">Binds 1 heme b (iron(II)-protoporphyrin IX) group per subunit.</text>
</comment>
<comment type="cofactor">
    <cofactor evidence="1">
        <name>FAD</name>
        <dbReference type="ChEBI" id="CHEBI:57692"/>
    </cofactor>
    <text evidence="1">Binds 1 FAD per subunit.</text>
</comment>
<comment type="domain">
    <text>Consists of two distinct domains; an N-terminal heme-containing oxygen-binding domain and a C-terminal reductase domain with binding sites for FAD and NAD(P)H.</text>
</comment>
<comment type="similarity">
    <text evidence="1">Belongs to the globin family. Two-domain flavohemoproteins subfamily.</text>
</comment>
<comment type="similarity">
    <text evidence="1">In the C-terminal section; belongs to the flavoprotein pyridine nucleotide cytochrome reductase family.</text>
</comment>
<keyword id="KW-0216">Detoxification</keyword>
<keyword id="KW-0274">FAD</keyword>
<keyword id="KW-0285">Flavoprotein</keyword>
<keyword id="KW-0349">Heme</keyword>
<keyword id="KW-0408">Iron</keyword>
<keyword id="KW-0479">Metal-binding</keyword>
<keyword id="KW-0520">NAD</keyword>
<keyword id="KW-0521">NADP</keyword>
<keyword id="KW-0560">Oxidoreductase</keyword>
<keyword id="KW-0561">Oxygen transport</keyword>
<keyword id="KW-1185">Reference proteome</keyword>
<keyword id="KW-0813">Transport</keyword>
<reference key="1">
    <citation type="journal article" date="2003" name="Proc. Natl. Acad. Sci. U.S.A.">
        <title>The complete genome sequence of Chromobacterium violaceum reveals remarkable and exploitable bacterial adaptability.</title>
        <authorList>
            <person name="Vasconcelos A.T.R."/>
            <person name="de Almeida D.F."/>
            <person name="Hungria M."/>
            <person name="Guimaraes C.T."/>
            <person name="Antonio R.V."/>
            <person name="Almeida F.C."/>
            <person name="de Almeida L.G.P."/>
            <person name="de Almeida R."/>
            <person name="Alves-Gomes J.A."/>
            <person name="Andrade E.M."/>
            <person name="Araripe J."/>
            <person name="de Araujo M.F.F."/>
            <person name="Astolfi-Filho S."/>
            <person name="Azevedo V."/>
            <person name="Baptista A.J."/>
            <person name="Bataus L.A.M."/>
            <person name="Batista J.S."/>
            <person name="Belo A."/>
            <person name="van den Berg C."/>
            <person name="Bogo M."/>
            <person name="Bonatto S."/>
            <person name="Bordignon J."/>
            <person name="Brigido M.M."/>
            <person name="Brito C.A."/>
            <person name="Brocchi M."/>
            <person name="Burity H.A."/>
            <person name="Camargo A.A."/>
            <person name="Cardoso D.D.P."/>
            <person name="Carneiro N.P."/>
            <person name="Carraro D.M."/>
            <person name="Carvalho C.M.B."/>
            <person name="Cascardo J.C.M."/>
            <person name="Cavada B.S."/>
            <person name="Chueire L.M.O."/>
            <person name="Creczynski-Pasa T.B."/>
            <person name="Cunha-Junior N.C."/>
            <person name="Fagundes N."/>
            <person name="Falcao C.L."/>
            <person name="Fantinatti F."/>
            <person name="Farias I.P."/>
            <person name="Felipe M.S.S."/>
            <person name="Ferrari L.P."/>
            <person name="Ferro J.A."/>
            <person name="Ferro M.I.T."/>
            <person name="Franco G.R."/>
            <person name="Freitas N.S.A."/>
            <person name="Furlan L.R."/>
            <person name="Gazzinelli R.T."/>
            <person name="Gomes E.A."/>
            <person name="Goncalves P.R."/>
            <person name="Grangeiro T.B."/>
            <person name="Grattapaglia D."/>
            <person name="Grisard E.C."/>
            <person name="Hanna E.S."/>
            <person name="Jardim S.N."/>
            <person name="Laurino J."/>
            <person name="Leoi L.C.T."/>
            <person name="Lima L.F.A."/>
            <person name="Loureiro M.F."/>
            <person name="Lyra M.C.C.P."/>
            <person name="Madeira H.M.F."/>
            <person name="Manfio G.P."/>
            <person name="Maranhao A.Q."/>
            <person name="Martins W.S."/>
            <person name="di Mauro S.M.Z."/>
            <person name="de Medeiros S.R.B."/>
            <person name="Meissner R.V."/>
            <person name="Moreira M.A.M."/>
            <person name="Nascimento F.F."/>
            <person name="Nicolas M.F."/>
            <person name="Oliveira J.G."/>
            <person name="Oliveira S.C."/>
            <person name="Paixao R.F.C."/>
            <person name="Parente J.A."/>
            <person name="Pedrosa F.O."/>
            <person name="Pena S.D.J."/>
            <person name="Pereira J.O."/>
            <person name="Pereira M."/>
            <person name="Pinto L.S.R.C."/>
            <person name="Pinto L.S."/>
            <person name="Porto J.I.R."/>
            <person name="Potrich D.P."/>
            <person name="Ramalho-Neto C.E."/>
            <person name="Reis A.M.M."/>
            <person name="Rigo L.U."/>
            <person name="Rondinelli E."/>
            <person name="Santos E.B.P."/>
            <person name="Santos F.R."/>
            <person name="Schneider M.P.C."/>
            <person name="Seuanez H.N."/>
            <person name="Silva A.M.R."/>
            <person name="da Silva A.L.C."/>
            <person name="Silva D.W."/>
            <person name="Silva R."/>
            <person name="Simoes I.C."/>
            <person name="Simon D."/>
            <person name="Soares C.M.A."/>
            <person name="Soares R.B.A."/>
            <person name="Souza E.M."/>
            <person name="Souza K.R.L."/>
            <person name="Souza R.C."/>
            <person name="Steffens M.B.R."/>
            <person name="Steindel M."/>
            <person name="Teixeira S.R."/>
            <person name="Urmenyi T."/>
            <person name="Vettore A."/>
            <person name="Wassem R."/>
            <person name="Zaha A."/>
            <person name="Simpson A.J.G."/>
        </authorList>
    </citation>
    <scope>NUCLEOTIDE SEQUENCE [LARGE SCALE GENOMIC DNA]</scope>
    <source>
        <strain>ATCC 12472 / DSM 30191 / JCM 1249 / CCUG 213 / NBRC 12614 / NCIMB 9131 / NCTC 9757 / MK</strain>
    </source>
</reference>
<name>HMP_CHRVO</name>
<dbReference type="EC" id="1.14.12.17" evidence="1"/>
<dbReference type="EMBL" id="AE016825">
    <property type="protein sequence ID" value="AAQ61149.1"/>
    <property type="molecule type" value="Genomic_DNA"/>
</dbReference>
<dbReference type="RefSeq" id="WP_011137035.1">
    <property type="nucleotide sequence ID" value="NC_005085.1"/>
</dbReference>
<dbReference type="SMR" id="Q7NSD8"/>
<dbReference type="STRING" id="243365.CV_3488"/>
<dbReference type="KEGG" id="cvi:CV_3488"/>
<dbReference type="eggNOG" id="COG1017">
    <property type="taxonomic scope" value="Bacteria"/>
</dbReference>
<dbReference type="eggNOG" id="COG1018">
    <property type="taxonomic scope" value="Bacteria"/>
</dbReference>
<dbReference type="HOGENOM" id="CLU_003827_12_0_4"/>
<dbReference type="OrthoDB" id="9801223at2"/>
<dbReference type="Proteomes" id="UP000001424">
    <property type="component" value="Chromosome"/>
</dbReference>
<dbReference type="GO" id="GO:0071949">
    <property type="term" value="F:FAD binding"/>
    <property type="evidence" value="ECO:0007669"/>
    <property type="project" value="InterPro"/>
</dbReference>
<dbReference type="GO" id="GO:0020037">
    <property type="term" value="F:heme binding"/>
    <property type="evidence" value="ECO:0007669"/>
    <property type="project" value="InterPro"/>
</dbReference>
<dbReference type="GO" id="GO:0046872">
    <property type="term" value="F:metal ion binding"/>
    <property type="evidence" value="ECO:0007669"/>
    <property type="project" value="UniProtKB-KW"/>
</dbReference>
<dbReference type="GO" id="GO:0008941">
    <property type="term" value="F:nitric oxide dioxygenase NAD(P)H activity"/>
    <property type="evidence" value="ECO:0007669"/>
    <property type="project" value="UniProtKB-UniRule"/>
</dbReference>
<dbReference type="GO" id="GO:0019825">
    <property type="term" value="F:oxygen binding"/>
    <property type="evidence" value="ECO:0007669"/>
    <property type="project" value="InterPro"/>
</dbReference>
<dbReference type="GO" id="GO:0005344">
    <property type="term" value="F:oxygen carrier activity"/>
    <property type="evidence" value="ECO:0007669"/>
    <property type="project" value="UniProtKB-UniRule"/>
</dbReference>
<dbReference type="GO" id="GO:0071500">
    <property type="term" value="P:cellular response to nitrosative stress"/>
    <property type="evidence" value="ECO:0007669"/>
    <property type="project" value="TreeGrafter"/>
</dbReference>
<dbReference type="GO" id="GO:0046210">
    <property type="term" value="P:nitric oxide catabolic process"/>
    <property type="evidence" value="ECO:0007669"/>
    <property type="project" value="TreeGrafter"/>
</dbReference>
<dbReference type="GO" id="GO:0009636">
    <property type="term" value="P:response to toxic substance"/>
    <property type="evidence" value="ECO:0007669"/>
    <property type="project" value="UniProtKB-KW"/>
</dbReference>
<dbReference type="CDD" id="cd14779">
    <property type="entry name" value="FHP_Ae-globin-like"/>
    <property type="match status" value="1"/>
</dbReference>
<dbReference type="CDD" id="cd06184">
    <property type="entry name" value="flavohem_like_fad_nad_binding"/>
    <property type="match status" value="1"/>
</dbReference>
<dbReference type="FunFam" id="1.10.490.10:FF:000003">
    <property type="entry name" value="Flavohemoprotein"/>
    <property type="match status" value="1"/>
</dbReference>
<dbReference type="FunFam" id="2.40.30.10:FF:000034">
    <property type="entry name" value="Flavohemoprotein"/>
    <property type="match status" value="1"/>
</dbReference>
<dbReference type="FunFam" id="3.40.50.80:FF:000010">
    <property type="entry name" value="Flavohemoprotein"/>
    <property type="match status" value="1"/>
</dbReference>
<dbReference type="Gene3D" id="1.10.490.10">
    <property type="entry name" value="Globins"/>
    <property type="match status" value="1"/>
</dbReference>
<dbReference type="Gene3D" id="3.40.50.80">
    <property type="entry name" value="Nucleotide-binding domain of ferredoxin-NADP reductase (FNR) module"/>
    <property type="match status" value="1"/>
</dbReference>
<dbReference type="Gene3D" id="2.40.30.10">
    <property type="entry name" value="Translation factors"/>
    <property type="match status" value="1"/>
</dbReference>
<dbReference type="HAMAP" id="MF_01252">
    <property type="entry name" value="Hmp"/>
    <property type="match status" value="1"/>
</dbReference>
<dbReference type="InterPro" id="IPR008333">
    <property type="entry name" value="Cbr1-like_FAD-bd_dom"/>
</dbReference>
<dbReference type="InterPro" id="IPR017927">
    <property type="entry name" value="FAD-bd_FR_type"/>
</dbReference>
<dbReference type="InterPro" id="IPR039261">
    <property type="entry name" value="FNR_nucleotide-bd"/>
</dbReference>
<dbReference type="InterPro" id="IPR000971">
    <property type="entry name" value="Globin"/>
</dbReference>
<dbReference type="InterPro" id="IPR009050">
    <property type="entry name" value="Globin-like_sf"/>
</dbReference>
<dbReference type="InterPro" id="IPR012292">
    <property type="entry name" value="Globin/Proto"/>
</dbReference>
<dbReference type="InterPro" id="IPR023950">
    <property type="entry name" value="Hmp"/>
</dbReference>
<dbReference type="InterPro" id="IPR001433">
    <property type="entry name" value="OxRdtase_FAD/NAD-bd"/>
</dbReference>
<dbReference type="InterPro" id="IPR017938">
    <property type="entry name" value="Riboflavin_synthase-like_b-brl"/>
</dbReference>
<dbReference type="NCBIfam" id="NF009805">
    <property type="entry name" value="PRK13289.1"/>
    <property type="match status" value="1"/>
</dbReference>
<dbReference type="PANTHER" id="PTHR43396">
    <property type="entry name" value="FLAVOHEMOPROTEIN"/>
    <property type="match status" value="1"/>
</dbReference>
<dbReference type="PANTHER" id="PTHR43396:SF3">
    <property type="entry name" value="FLAVOHEMOPROTEIN"/>
    <property type="match status" value="1"/>
</dbReference>
<dbReference type="Pfam" id="PF00970">
    <property type="entry name" value="FAD_binding_6"/>
    <property type="match status" value="1"/>
</dbReference>
<dbReference type="Pfam" id="PF00042">
    <property type="entry name" value="Globin"/>
    <property type="match status" value="1"/>
</dbReference>
<dbReference type="Pfam" id="PF00175">
    <property type="entry name" value="NAD_binding_1"/>
    <property type="match status" value="1"/>
</dbReference>
<dbReference type="SUPFAM" id="SSF52343">
    <property type="entry name" value="Ferredoxin reductase-like, C-terminal NADP-linked domain"/>
    <property type="match status" value="1"/>
</dbReference>
<dbReference type="SUPFAM" id="SSF46458">
    <property type="entry name" value="Globin-like"/>
    <property type="match status" value="1"/>
</dbReference>
<dbReference type="SUPFAM" id="SSF63380">
    <property type="entry name" value="Riboflavin synthase domain-like"/>
    <property type="match status" value="1"/>
</dbReference>
<dbReference type="PROSITE" id="PS51384">
    <property type="entry name" value="FAD_FR"/>
    <property type="match status" value="1"/>
</dbReference>
<dbReference type="PROSITE" id="PS01033">
    <property type="entry name" value="GLOBIN"/>
    <property type="match status" value="1"/>
</dbReference>
<proteinExistence type="inferred from homology"/>
<protein>
    <recommendedName>
        <fullName evidence="1">Flavohemoprotein</fullName>
    </recommendedName>
    <alternativeName>
        <fullName evidence="1">Flavohemoglobin</fullName>
    </alternativeName>
    <alternativeName>
        <fullName evidence="1">Hemoglobin-like protein</fullName>
    </alternativeName>
    <alternativeName>
        <fullName evidence="1">Nitric oxide dioxygenase</fullName>
        <shortName evidence="1">NO oxygenase</shortName>
        <shortName evidence="1">NOD</shortName>
        <ecNumber evidence="1">1.14.12.17</ecNumber>
    </alternativeName>
</protein>
<evidence type="ECO:0000255" key="1">
    <source>
        <dbReference type="HAMAP-Rule" id="MF_01252"/>
    </source>
</evidence>
<evidence type="ECO:0000255" key="2">
    <source>
        <dbReference type="PROSITE-ProRule" id="PRU00238"/>
    </source>
</evidence>
<accession>Q7NSD8</accession>
<gene>
    <name evidence="1" type="primary">hmp</name>
    <name type="synonym">hmpA</name>
    <name type="ordered locus">CV_3488</name>
</gene>
<feature type="chain" id="PRO_0000052429" description="Flavohemoprotein">
    <location>
        <begin position="1"/>
        <end position="404"/>
    </location>
</feature>
<feature type="domain" description="Globin" evidence="2">
    <location>
        <begin position="1"/>
        <end position="138"/>
    </location>
</feature>
<feature type="domain" description="FAD-binding FR-type" evidence="1">
    <location>
        <begin position="152"/>
        <end position="263"/>
    </location>
</feature>
<feature type="region of interest" description="Reductase">
    <location>
        <begin position="149"/>
        <end position="404"/>
    </location>
</feature>
<feature type="active site" description="Charge relay system" evidence="1">
    <location>
        <position position="95"/>
    </location>
</feature>
<feature type="active site" description="Charge relay system" evidence="1">
    <location>
        <position position="137"/>
    </location>
</feature>
<feature type="binding site" description="proximal binding residue" evidence="1">
    <location>
        <position position="85"/>
    </location>
    <ligand>
        <name>heme b</name>
        <dbReference type="ChEBI" id="CHEBI:60344"/>
    </ligand>
    <ligandPart>
        <name>Fe</name>
        <dbReference type="ChEBI" id="CHEBI:18248"/>
    </ligandPart>
</feature>
<feature type="binding site" evidence="1">
    <location>
        <position position="190"/>
    </location>
    <ligand>
        <name>FAD</name>
        <dbReference type="ChEBI" id="CHEBI:57692"/>
    </ligand>
</feature>
<feature type="binding site" evidence="1">
    <location>
        <begin position="206"/>
        <end position="209"/>
    </location>
    <ligand>
        <name>FAD</name>
        <dbReference type="ChEBI" id="CHEBI:57692"/>
    </ligand>
</feature>
<feature type="binding site" evidence="1">
    <location>
        <begin position="276"/>
        <end position="281"/>
    </location>
    <ligand>
        <name>NADP(+)</name>
        <dbReference type="ChEBI" id="CHEBI:58349"/>
    </ligand>
</feature>
<feature type="binding site" evidence="1">
    <location>
        <begin position="396"/>
        <end position="399"/>
    </location>
    <ligand>
        <name>FAD</name>
        <dbReference type="ChEBI" id="CHEBI:57692"/>
    </ligand>
</feature>
<feature type="site" description="Involved in heme-bound ligand stabilization and O-O bond activation" evidence="1">
    <location>
        <position position="29"/>
    </location>
</feature>
<feature type="site" description="Influences the redox potential of the prosthetic heme and FAD groups" evidence="1">
    <location>
        <position position="84"/>
    </location>
</feature>
<feature type="site" description="Influences the redox potential of the prosthetic heme and FAD groups" evidence="1">
    <location>
        <position position="395"/>
    </location>
</feature>